<feature type="chain" id="PRO_0000092266" description="Sulfate/thiosulfate import ATP-binding protein CysA">
    <location>
        <begin position="1"/>
        <end position="365"/>
    </location>
</feature>
<feature type="domain" description="ABC transporter" evidence="1">
    <location>
        <begin position="3"/>
        <end position="237"/>
    </location>
</feature>
<feature type="binding site" evidence="1">
    <location>
        <begin position="35"/>
        <end position="42"/>
    </location>
    <ligand>
        <name>ATP</name>
        <dbReference type="ChEBI" id="CHEBI:30616"/>
    </ligand>
</feature>
<evidence type="ECO:0000255" key="1">
    <source>
        <dbReference type="HAMAP-Rule" id="MF_01701"/>
    </source>
</evidence>
<reference key="1">
    <citation type="journal article" date="2002" name="Proc. Natl. Acad. Sci. U.S.A.">
        <title>Extensive mosaic structure revealed by the complete genome sequence of uropathogenic Escherichia coli.</title>
        <authorList>
            <person name="Welch R.A."/>
            <person name="Burland V."/>
            <person name="Plunkett G. III"/>
            <person name="Redford P."/>
            <person name="Roesch P."/>
            <person name="Rasko D."/>
            <person name="Buckles E.L."/>
            <person name="Liou S.-R."/>
            <person name="Boutin A."/>
            <person name="Hackett J."/>
            <person name="Stroud D."/>
            <person name="Mayhew G.F."/>
            <person name="Rose D.J."/>
            <person name="Zhou S."/>
            <person name="Schwartz D.C."/>
            <person name="Perna N.T."/>
            <person name="Mobley H.L.T."/>
            <person name="Donnenberg M.S."/>
            <person name="Blattner F.R."/>
        </authorList>
    </citation>
    <scope>NUCLEOTIDE SEQUENCE [LARGE SCALE GENOMIC DNA]</scope>
    <source>
        <strain>CFT073 / ATCC 700928 / UPEC</strain>
    </source>
</reference>
<proteinExistence type="inferred from homology"/>
<organism>
    <name type="scientific">Escherichia coli O6:H1 (strain CFT073 / ATCC 700928 / UPEC)</name>
    <dbReference type="NCBI Taxonomy" id="199310"/>
    <lineage>
        <taxon>Bacteria</taxon>
        <taxon>Pseudomonadati</taxon>
        <taxon>Pseudomonadota</taxon>
        <taxon>Gammaproteobacteria</taxon>
        <taxon>Enterobacterales</taxon>
        <taxon>Enterobacteriaceae</taxon>
        <taxon>Escherichia</taxon>
    </lineage>
</organism>
<dbReference type="EC" id="7.3.2.3" evidence="1"/>
<dbReference type="EMBL" id="AE014075">
    <property type="protein sequence ID" value="AAN81406.1"/>
    <property type="molecule type" value="Genomic_DNA"/>
</dbReference>
<dbReference type="RefSeq" id="WP_000021034.1">
    <property type="nucleotide sequence ID" value="NZ_CP051263.1"/>
</dbReference>
<dbReference type="SMR" id="Q8FFB3"/>
<dbReference type="STRING" id="199310.c2956"/>
<dbReference type="KEGG" id="ecc:c2956"/>
<dbReference type="eggNOG" id="COG1118">
    <property type="taxonomic scope" value="Bacteria"/>
</dbReference>
<dbReference type="HOGENOM" id="CLU_000604_1_1_6"/>
<dbReference type="BioCyc" id="ECOL199310:C2956-MONOMER"/>
<dbReference type="Proteomes" id="UP000001410">
    <property type="component" value="Chromosome"/>
</dbReference>
<dbReference type="GO" id="GO:0043190">
    <property type="term" value="C:ATP-binding cassette (ABC) transporter complex"/>
    <property type="evidence" value="ECO:0007669"/>
    <property type="project" value="InterPro"/>
</dbReference>
<dbReference type="GO" id="GO:0015419">
    <property type="term" value="F:ABC-type sulfate transporter activity"/>
    <property type="evidence" value="ECO:0007669"/>
    <property type="project" value="InterPro"/>
</dbReference>
<dbReference type="GO" id="GO:0102025">
    <property type="term" value="F:ABC-type thiosulfate transporter activity"/>
    <property type="evidence" value="ECO:0007669"/>
    <property type="project" value="RHEA"/>
</dbReference>
<dbReference type="GO" id="GO:0005524">
    <property type="term" value="F:ATP binding"/>
    <property type="evidence" value="ECO:0007669"/>
    <property type="project" value="UniProtKB-KW"/>
</dbReference>
<dbReference type="GO" id="GO:0016887">
    <property type="term" value="F:ATP hydrolysis activity"/>
    <property type="evidence" value="ECO:0007669"/>
    <property type="project" value="InterPro"/>
</dbReference>
<dbReference type="CDD" id="cd03296">
    <property type="entry name" value="ABC_CysA_sulfate_importer"/>
    <property type="match status" value="1"/>
</dbReference>
<dbReference type="FunFam" id="3.40.50.300:FF:000227">
    <property type="entry name" value="Sulfate/thiosulfate import ATP-binding protein CysA"/>
    <property type="match status" value="1"/>
</dbReference>
<dbReference type="Gene3D" id="3.40.50.300">
    <property type="entry name" value="P-loop containing nucleotide triphosphate hydrolases"/>
    <property type="match status" value="1"/>
</dbReference>
<dbReference type="InterPro" id="IPR003593">
    <property type="entry name" value="AAA+_ATPase"/>
</dbReference>
<dbReference type="InterPro" id="IPR050093">
    <property type="entry name" value="ABC_SmlMolc_Importer"/>
</dbReference>
<dbReference type="InterPro" id="IPR003439">
    <property type="entry name" value="ABC_transporter-like_ATP-bd"/>
</dbReference>
<dbReference type="InterPro" id="IPR017871">
    <property type="entry name" value="ABC_transporter-like_CS"/>
</dbReference>
<dbReference type="InterPro" id="IPR008995">
    <property type="entry name" value="Mo/tungstate-bd_C_term_dom"/>
</dbReference>
<dbReference type="InterPro" id="IPR027417">
    <property type="entry name" value="P-loop_NTPase"/>
</dbReference>
<dbReference type="InterPro" id="IPR005666">
    <property type="entry name" value="Sulph_transpt1"/>
</dbReference>
<dbReference type="NCBIfam" id="TIGR00968">
    <property type="entry name" value="3a0106s01"/>
    <property type="match status" value="1"/>
</dbReference>
<dbReference type="NCBIfam" id="NF008105">
    <property type="entry name" value="PRK10851.1"/>
    <property type="match status" value="1"/>
</dbReference>
<dbReference type="PANTHER" id="PTHR42781">
    <property type="entry name" value="SPERMIDINE/PUTRESCINE IMPORT ATP-BINDING PROTEIN POTA"/>
    <property type="match status" value="1"/>
</dbReference>
<dbReference type="PANTHER" id="PTHR42781:SF4">
    <property type="entry name" value="SPERMIDINE_PUTRESCINE IMPORT ATP-BINDING PROTEIN POTA"/>
    <property type="match status" value="1"/>
</dbReference>
<dbReference type="Pfam" id="PF00005">
    <property type="entry name" value="ABC_tran"/>
    <property type="match status" value="1"/>
</dbReference>
<dbReference type="SMART" id="SM00382">
    <property type="entry name" value="AAA"/>
    <property type="match status" value="1"/>
</dbReference>
<dbReference type="SUPFAM" id="SSF50331">
    <property type="entry name" value="MOP-like"/>
    <property type="match status" value="1"/>
</dbReference>
<dbReference type="SUPFAM" id="SSF52540">
    <property type="entry name" value="P-loop containing nucleoside triphosphate hydrolases"/>
    <property type="match status" value="1"/>
</dbReference>
<dbReference type="PROSITE" id="PS00211">
    <property type="entry name" value="ABC_TRANSPORTER_1"/>
    <property type="match status" value="1"/>
</dbReference>
<dbReference type="PROSITE" id="PS50893">
    <property type="entry name" value="ABC_TRANSPORTER_2"/>
    <property type="match status" value="1"/>
</dbReference>
<dbReference type="PROSITE" id="PS51237">
    <property type="entry name" value="CYSA"/>
    <property type="match status" value="1"/>
</dbReference>
<sequence length="365" mass="41061">MSIEIANIKKSFGRTQVLNDISLDIPSGQMVALLGPSGSGKTTLLRIIAGLEHQTSGHIRFHGTDVSRLHARDRKVGFVFQHYALFRHMTVFDNIAFGLTVLPRRERPNAAAIKAKVTKLLEMVQLAHLADRYPAQLSGGQKQRVALARALAVEPQILLLDEPFGALDAQVRKELRRWLRQLHEELKFTSVFVTHDQEEATEVADRVVVMSQGNIEQADAPDQVWREPATRFVLEFMGEVNRLQGTIRGGQFHVGAHRWPLGYTPAYQGPVDLFLRPWEVDISRRTSLDSPLPVQVLEASPKGHYTQLVVQPLGWYNEPLTVVMHGDDAPQRGDRLYVGLQHARLYNGDERIETRDEELALAQSA</sequence>
<name>CYSA_ECOL6</name>
<protein>
    <recommendedName>
        <fullName evidence="1">Sulfate/thiosulfate import ATP-binding protein CysA</fullName>
        <ecNumber evidence="1">7.3.2.3</ecNumber>
    </recommendedName>
    <alternativeName>
        <fullName evidence="1">Sulfate-transporting ATPase</fullName>
    </alternativeName>
</protein>
<comment type="function">
    <text evidence="1">Part of the ABC transporter complex CysAWTP involved in sulfate/thiosulfate import. Responsible for energy coupling to the transport system.</text>
</comment>
<comment type="catalytic activity">
    <reaction evidence="1">
        <text>sulfate(out) + ATP + H2O = sulfate(in) + ADP + phosphate + H(+)</text>
        <dbReference type="Rhea" id="RHEA:10192"/>
        <dbReference type="ChEBI" id="CHEBI:15377"/>
        <dbReference type="ChEBI" id="CHEBI:15378"/>
        <dbReference type="ChEBI" id="CHEBI:16189"/>
        <dbReference type="ChEBI" id="CHEBI:30616"/>
        <dbReference type="ChEBI" id="CHEBI:43474"/>
        <dbReference type="ChEBI" id="CHEBI:456216"/>
        <dbReference type="EC" id="7.3.2.3"/>
    </reaction>
</comment>
<comment type="catalytic activity">
    <reaction evidence="1">
        <text>thiosulfate(out) + ATP + H2O = thiosulfate(in) + ADP + phosphate + H(+)</text>
        <dbReference type="Rhea" id="RHEA:29871"/>
        <dbReference type="ChEBI" id="CHEBI:15377"/>
        <dbReference type="ChEBI" id="CHEBI:15378"/>
        <dbReference type="ChEBI" id="CHEBI:30616"/>
        <dbReference type="ChEBI" id="CHEBI:33542"/>
        <dbReference type="ChEBI" id="CHEBI:43474"/>
        <dbReference type="ChEBI" id="CHEBI:456216"/>
        <dbReference type="EC" id="7.3.2.3"/>
    </reaction>
</comment>
<comment type="subunit">
    <text evidence="1">The complex is composed of two ATP-binding proteins (CysA), two transmembrane proteins (CysT and CysW) and a solute-binding protein (CysP).</text>
</comment>
<comment type="subcellular location">
    <subcellularLocation>
        <location evidence="1">Cell inner membrane</location>
        <topology evidence="1">Peripheral membrane protein</topology>
    </subcellularLocation>
</comment>
<comment type="similarity">
    <text evidence="1">Belongs to the ABC transporter superfamily. Sulfate/tungstate importer (TC 3.A.1.6) family.</text>
</comment>
<accession>Q8FFB3</accession>
<gene>
    <name evidence="1" type="primary">cysA</name>
    <name type="ordered locus">c2956</name>
</gene>
<keyword id="KW-0067">ATP-binding</keyword>
<keyword id="KW-0997">Cell inner membrane</keyword>
<keyword id="KW-1003">Cell membrane</keyword>
<keyword id="KW-0472">Membrane</keyword>
<keyword id="KW-0547">Nucleotide-binding</keyword>
<keyword id="KW-1185">Reference proteome</keyword>
<keyword id="KW-0764">Sulfate transport</keyword>
<keyword id="KW-1278">Translocase</keyword>
<keyword id="KW-0813">Transport</keyword>